<accession>Q6EW21</accession>
<organism>
    <name type="scientific">Nymphaea alba</name>
    <name type="common">White water-lily</name>
    <name type="synonym">Castalia alba</name>
    <dbReference type="NCBI Taxonomy" id="34301"/>
    <lineage>
        <taxon>Eukaryota</taxon>
        <taxon>Viridiplantae</taxon>
        <taxon>Streptophyta</taxon>
        <taxon>Embryophyta</taxon>
        <taxon>Tracheophyta</taxon>
        <taxon>Spermatophyta</taxon>
        <taxon>Magnoliopsida</taxon>
        <taxon>Nymphaeales</taxon>
        <taxon>Nymphaeaceae</taxon>
        <taxon>Nymphaea</taxon>
    </lineage>
</organism>
<geneLocation type="chloroplast"/>
<feature type="chain" id="PRO_0000061873" description="Cytochrome b6-f complex subunit 4">
    <location>
        <begin position="1"/>
        <end position="170"/>
    </location>
</feature>
<feature type="transmembrane region" description="Helical" evidence="2">
    <location>
        <begin position="36"/>
        <end position="56"/>
    </location>
</feature>
<feature type="transmembrane region" description="Helical" evidence="2">
    <location>
        <begin position="95"/>
        <end position="115"/>
    </location>
</feature>
<feature type="transmembrane region" description="Helical" evidence="2">
    <location>
        <begin position="131"/>
        <end position="151"/>
    </location>
</feature>
<keyword id="KW-0150">Chloroplast</keyword>
<keyword id="KW-0249">Electron transport</keyword>
<keyword id="KW-0472">Membrane</keyword>
<keyword id="KW-0602">Photosynthesis</keyword>
<keyword id="KW-0934">Plastid</keyword>
<keyword id="KW-0793">Thylakoid</keyword>
<keyword id="KW-0812">Transmembrane</keyword>
<keyword id="KW-1133">Transmembrane helix</keyword>
<keyword id="KW-0813">Transport</keyword>
<protein>
    <recommendedName>
        <fullName evidence="2">Cytochrome b6-f complex subunit 4</fullName>
    </recommendedName>
    <alternativeName>
        <fullName evidence="2">17 kDa polypeptide</fullName>
    </alternativeName>
</protein>
<proteinExistence type="inferred from homology"/>
<sequence>MGVTKKPDLNDPVLRAKLAKGMGHNYYGEPAWPNDLLYIFPVVILGTIACNVGLAVLEPSMIGEPADPFATPLEILPEWYFFPVFQILRTVPNKLLGVLLMVSVPAGLLTVPFLENVNKFQNPFRRPVATTVFLIGTAVALWLGIGATLPIDKSLTLGLFQIQIDLEILR</sequence>
<comment type="function">
    <text evidence="2">Component of the cytochrome b6-f complex, which mediates electron transfer between photosystem II (PSII) and photosystem I (PSI), cyclic electron flow around PSI, and state transitions.</text>
</comment>
<comment type="subunit">
    <text evidence="1">The 4 large subunits of the cytochrome b6-f complex are cytochrome b6, subunit IV (17 kDa polypeptide, petD), cytochrome f and the Rieske protein, while the 4 small subunits are petG, petL, petM and petN. The complex functions as a dimer (By similarity).</text>
</comment>
<comment type="subcellular location">
    <subcellularLocation>
        <location evidence="2">Plastid</location>
        <location evidence="2">Chloroplast thylakoid membrane</location>
        <topology evidence="2">Multi-pass membrane protein</topology>
    </subcellularLocation>
</comment>
<comment type="similarity">
    <text evidence="2">Belongs to the cytochrome b family. PetD subfamily.</text>
</comment>
<evidence type="ECO:0000250" key="1"/>
<evidence type="ECO:0000255" key="2">
    <source>
        <dbReference type="HAMAP-Rule" id="MF_01344"/>
    </source>
</evidence>
<dbReference type="EMBL" id="AJ627251">
    <property type="protein sequence ID" value="CAF28625.1"/>
    <property type="molecule type" value="Genomic_DNA"/>
</dbReference>
<dbReference type="RefSeq" id="YP_053185.1">
    <property type="nucleotide sequence ID" value="NC_006050.1"/>
</dbReference>
<dbReference type="SMR" id="Q6EW21"/>
<dbReference type="GeneID" id="2896226"/>
<dbReference type="GO" id="GO:0009535">
    <property type="term" value="C:chloroplast thylakoid membrane"/>
    <property type="evidence" value="ECO:0007669"/>
    <property type="project" value="UniProtKB-SubCell"/>
</dbReference>
<dbReference type="GO" id="GO:0045158">
    <property type="term" value="F:electron transporter, transferring electrons within cytochrome b6/f complex of photosystem II activity"/>
    <property type="evidence" value="ECO:0007669"/>
    <property type="project" value="UniProtKB-UniRule"/>
</dbReference>
<dbReference type="GO" id="GO:0045156">
    <property type="term" value="F:electron transporter, transferring electrons within the cyclic electron transport pathway of photosynthesis activity"/>
    <property type="evidence" value="ECO:0007669"/>
    <property type="project" value="InterPro"/>
</dbReference>
<dbReference type="GO" id="GO:0016491">
    <property type="term" value="F:oxidoreductase activity"/>
    <property type="evidence" value="ECO:0007669"/>
    <property type="project" value="InterPro"/>
</dbReference>
<dbReference type="GO" id="GO:0009767">
    <property type="term" value="P:photosynthetic electron transport chain"/>
    <property type="evidence" value="ECO:0007669"/>
    <property type="project" value="InterPro"/>
</dbReference>
<dbReference type="CDD" id="cd00290">
    <property type="entry name" value="cytochrome_b_C"/>
    <property type="match status" value="1"/>
</dbReference>
<dbReference type="FunFam" id="1.10.287.980:FF:000001">
    <property type="entry name" value="Cytochrome b6-f complex subunit 4"/>
    <property type="match status" value="1"/>
</dbReference>
<dbReference type="FunFam" id="1.20.5.510:FF:000002">
    <property type="entry name" value="Cytochrome b6-f complex subunit 4"/>
    <property type="match status" value="1"/>
</dbReference>
<dbReference type="Gene3D" id="1.10.287.980">
    <property type="entry name" value="plastocyanin oxidoreductase"/>
    <property type="match status" value="1"/>
</dbReference>
<dbReference type="Gene3D" id="1.20.5.510">
    <property type="entry name" value="Single helix bin"/>
    <property type="match status" value="1"/>
</dbReference>
<dbReference type="HAMAP" id="MF_01344">
    <property type="entry name" value="Cytb6_f_subIV"/>
    <property type="match status" value="1"/>
</dbReference>
<dbReference type="InterPro" id="IPR005798">
    <property type="entry name" value="Cyt_b/b6_C"/>
</dbReference>
<dbReference type="InterPro" id="IPR036150">
    <property type="entry name" value="Cyt_b/b6_C_sf"/>
</dbReference>
<dbReference type="InterPro" id="IPR005870">
    <property type="entry name" value="Cyt_b6/f_cplx_suIV"/>
</dbReference>
<dbReference type="InterPro" id="IPR048260">
    <property type="entry name" value="Cytochrome_b_C_euk/bac"/>
</dbReference>
<dbReference type="NCBIfam" id="TIGR01156">
    <property type="entry name" value="cytb6_f_IV"/>
    <property type="match status" value="1"/>
</dbReference>
<dbReference type="PANTHER" id="PTHR19271">
    <property type="entry name" value="CYTOCHROME B"/>
    <property type="match status" value="1"/>
</dbReference>
<dbReference type="PANTHER" id="PTHR19271:SF40">
    <property type="entry name" value="CYTOCHROME B"/>
    <property type="match status" value="1"/>
</dbReference>
<dbReference type="Pfam" id="PF00032">
    <property type="entry name" value="Cytochrom_B_C"/>
    <property type="match status" value="1"/>
</dbReference>
<dbReference type="PIRSF" id="PIRSF000033">
    <property type="entry name" value="B6f_17K"/>
    <property type="match status" value="1"/>
</dbReference>
<dbReference type="SUPFAM" id="SSF81648">
    <property type="entry name" value="a domain/subunit of cytochrome bc1 complex (Ubiquinol-cytochrome c reductase)"/>
    <property type="match status" value="1"/>
</dbReference>
<dbReference type="PROSITE" id="PS51003">
    <property type="entry name" value="CYTB_CTER"/>
    <property type="match status" value="1"/>
</dbReference>
<gene>
    <name evidence="2" type="primary">petD</name>
</gene>
<reference key="1">
    <citation type="journal article" date="2004" name="Mol. Biol. Evol.">
        <title>The chloroplast genome of Nymphaea alba: whole-genome analyses and the problem of identifying the most basal angiosperm.</title>
        <authorList>
            <person name="Goremykin V.V."/>
            <person name="Hirsch-Ernst K.I."/>
            <person name="Woelfl S."/>
            <person name="Hellwig F.H."/>
        </authorList>
    </citation>
    <scope>NUCLEOTIDE SEQUENCE [LARGE SCALE GENOMIC DNA]</scope>
</reference>
<name>PETD_NYMAL</name>